<organism>
    <name type="scientific">Pseudomonas putida (strain ATCC 47054 / DSM 6125 / CFBP 8728 / NCIMB 11950 / KT2440)</name>
    <dbReference type="NCBI Taxonomy" id="160488"/>
    <lineage>
        <taxon>Bacteria</taxon>
        <taxon>Pseudomonadati</taxon>
        <taxon>Pseudomonadota</taxon>
        <taxon>Gammaproteobacteria</taxon>
        <taxon>Pseudomonadales</taxon>
        <taxon>Pseudomonadaceae</taxon>
        <taxon>Pseudomonas</taxon>
    </lineage>
</organism>
<sequence>MRKGASNLNVSTAQRAAPMVSEAPIVMDCKLDKIFYGNFMAVRDSHVPIRKNEITGFIGPSGCGKSTVLRSLNRMNDLVKGFRFEGHVHFLGQDVYGKGVDPVVVRRYIGMVFQQPNPFSMSIFDNVAFGLRLNRYKGDLGDRVKHALQGAALWDEVKDKLKVSGLSLSGGQQQRLCIARAIATEPEVLLLDEPCSALDPIATRRVEELMVELKKDYTIALVTHNMQQAIRVADTTAFFSVDISQGTRTGYLVEMGPTAQIFQNPREQLTSDYISGKFS</sequence>
<keyword id="KW-0067">ATP-binding</keyword>
<keyword id="KW-0997">Cell inner membrane</keyword>
<keyword id="KW-1003">Cell membrane</keyword>
<keyword id="KW-0472">Membrane</keyword>
<keyword id="KW-0547">Nucleotide-binding</keyword>
<keyword id="KW-0592">Phosphate transport</keyword>
<keyword id="KW-1185">Reference proteome</keyword>
<keyword id="KW-1278">Translocase</keyword>
<keyword id="KW-0813">Transport</keyword>
<proteinExistence type="inferred from homology"/>
<comment type="function">
    <text evidence="1">Part of the ABC transporter complex PstSACB involved in phosphate import. Responsible for energy coupling to the transport system.</text>
</comment>
<comment type="catalytic activity">
    <reaction evidence="1">
        <text>phosphate(out) + ATP + H2O = ADP + 2 phosphate(in) + H(+)</text>
        <dbReference type="Rhea" id="RHEA:24440"/>
        <dbReference type="ChEBI" id="CHEBI:15377"/>
        <dbReference type="ChEBI" id="CHEBI:15378"/>
        <dbReference type="ChEBI" id="CHEBI:30616"/>
        <dbReference type="ChEBI" id="CHEBI:43474"/>
        <dbReference type="ChEBI" id="CHEBI:456216"/>
        <dbReference type="EC" id="7.3.2.1"/>
    </reaction>
</comment>
<comment type="subunit">
    <text evidence="1">The complex is composed of two ATP-binding proteins (PstB), two transmembrane proteins (PstC and PstA) and a solute-binding protein (PstS).</text>
</comment>
<comment type="subcellular location">
    <subcellularLocation>
        <location evidence="1">Cell inner membrane</location>
        <topology evidence="1">Peripheral membrane protein</topology>
    </subcellularLocation>
</comment>
<comment type="similarity">
    <text evidence="1">Belongs to the ABC transporter superfamily. Phosphate importer (TC 3.A.1.7) family.</text>
</comment>
<gene>
    <name evidence="1" type="primary">pstB1</name>
    <name type="ordered locus">PP_2659</name>
</gene>
<dbReference type="EC" id="7.3.2.1" evidence="1"/>
<dbReference type="EMBL" id="AE015451">
    <property type="protein sequence ID" value="AAN68267.1"/>
    <property type="molecule type" value="Genomic_DNA"/>
</dbReference>
<dbReference type="RefSeq" id="NP_744803.1">
    <property type="nucleotide sequence ID" value="NC_002947.4"/>
</dbReference>
<dbReference type="SMR" id="Q88JJ0"/>
<dbReference type="STRING" id="160488.PP_2659"/>
<dbReference type="PaxDb" id="160488-PP_2659"/>
<dbReference type="KEGG" id="ppu:PP_2659"/>
<dbReference type="PATRIC" id="fig|160488.4.peg.2821"/>
<dbReference type="eggNOG" id="COG1117">
    <property type="taxonomic scope" value="Bacteria"/>
</dbReference>
<dbReference type="HOGENOM" id="CLU_000604_1_22_6"/>
<dbReference type="OrthoDB" id="9802264at2"/>
<dbReference type="PhylomeDB" id="Q88JJ0"/>
<dbReference type="BioCyc" id="PPUT160488:G1G01-2840-MONOMER"/>
<dbReference type="Proteomes" id="UP000000556">
    <property type="component" value="Chromosome"/>
</dbReference>
<dbReference type="GO" id="GO:0005886">
    <property type="term" value="C:plasma membrane"/>
    <property type="evidence" value="ECO:0007669"/>
    <property type="project" value="UniProtKB-SubCell"/>
</dbReference>
<dbReference type="GO" id="GO:0005524">
    <property type="term" value="F:ATP binding"/>
    <property type="evidence" value="ECO:0007669"/>
    <property type="project" value="UniProtKB-KW"/>
</dbReference>
<dbReference type="GO" id="GO:0016887">
    <property type="term" value="F:ATP hydrolysis activity"/>
    <property type="evidence" value="ECO:0007669"/>
    <property type="project" value="InterPro"/>
</dbReference>
<dbReference type="GO" id="GO:0015415">
    <property type="term" value="F:ATPase-coupled phosphate ion transmembrane transporter activity"/>
    <property type="evidence" value="ECO:0007669"/>
    <property type="project" value="UniProtKB-EC"/>
</dbReference>
<dbReference type="GO" id="GO:0035435">
    <property type="term" value="P:phosphate ion transmembrane transport"/>
    <property type="evidence" value="ECO:0007669"/>
    <property type="project" value="InterPro"/>
</dbReference>
<dbReference type="CDD" id="cd03260">
    <property type="entry name" value="ABC_PstB_phosphate_transporter"/>
    <property type="match status" value="1"/>
</dbReference>
<dbReference type="Gene3D" id="3.40.50.300">
    <property type="entry name" value="P-loop containing nucleotide triphosphate hydrolases"/>
    <property type="match status" value="1"/>
</dbReference>
<dbReference type="InterPro" id="IPR003593">
    <property type="entry name" value="AAA+_ATPase"/>
</dbReference>
<dbReference type="InterPro" id="IPR003439">
    <property type="entry name" value="ABC_transporter-like_ATP-bd"/>
</dbReference>
<dbReference type="InterPro" id="IPR017871">
    <property type="entry name" value="ABC_transporter-like_CS"/>
</dbReference>
<dbReference type="InterPro" id="IPR027417">
    <property type="entry name" value="P-loop_NTPase"/>
</dbReference>
<dbReference type="InterPro" id="IPR005670">
    <property type="entry name" value="PstB-like"/>
</dbReference>
<dbReference type="NCBIfam" id="TIGR00972">
    <property type="entry name" value="3a0107s01c2"/>
    <property type="match status" value="1"/>
</dbReference>
<dbReference type="PANTHER" id="PTHR43423">
    <property type="entry name" value="ABC TRANSPORTER I FAMILY MEMBER 17"/>
    <property type="match status" value="1"/>
</dbReference>
<dbReference type="PANTHER" id="PTHR43423:SF1">
    <property type="entry name" value="ABC TRANSPORTER I FAMILY MEMBER 17"/>
    <property type="match status" value="1"/>
</dbReference>
<dbReference type="Pfam" id="PF00005">
    <property type="entry name" value="ABC_tran"/>
    <property type="match status" value="1"/>
</dbReference>
<dbReference type="SMART" id="SM00382">
    <property type="entry name" value="AAA"/>
    <property type="match status" value="1"/>
</dbReference>
<dbReference type="SUPFAM" id="SSF52540">
    <property type="entry name" value="P-loop containing nucleoside triphosphate hydrolases"/>
    <property type="match status" value="1"/>
</dbReference>
<dbReference type="PROSITE" id="PS00211">
    <property type="entry name" value="ABC_TRANSPORTER_1"/>
    <property type="match status" value="1"/>
</dbReference>
<dbReference type="PROSITE" id="PS50893">
    <property type="entry name" value="ABC_TRANSPORTER_2"/>
    <property type="match status" value="1"/>
</dbReference>
<dbReference type="PROSITE" id="PS51238">
    <property type="entry name" value="PSTB"/>
    <property type="match status" value="1"/>
</dbReference>
<feature type="chain" id="PRO_0000092862" description="Phosphate import ATP-binding protein PstB 1">
    <location>
        <begin position="1"/>
        <end position="279"/>
    </location>
</feature>
<feature type="domain" description="ABC transporter" evidence="1">
    <location>
        <begin position="26"/>
        <end position="274"/>
    </location>
</feature>
<feature type="binding site" evidence="1">
    <location>
        <begin position="59"/>
        <end position="66"/>
    </location>
    <ligand>
        <name>ATP</name>
        <dbReference type="ChEBI" id="CHEBI:30616"/>
    </ligand>
</feature>
<reference key="1">
    <citation type="journal article" date="2002" name="Environ. Microbiol.">
        <title>Complete genome sequence and comparative analysis of the metabolically versatile Pseudomonas putida KT2440.</title>
        <authorList>
            <person name="Nelson K.E."/>
            <person name="Weinel C."/>
            <person name="Paulsen I.T."/>
            <person name="Dodson R.J."/>
            <person name="Hilbert H."/>
            <person name="Martins dos Santos V.A.P."/>
            <person name="Fouts D.E."/>
            <person name="Gill S.R."/>
            <person name="Pop M."/>
            <person name="Holmes M."/>
            <person name="Brinkac L.M."/>
            <person name="Beanan M.J."/>
            <person name="DeBoy R.T."/>
            <person name="Daugherty S.C."/>
            <person name="Kolonay J.F."/>
            <person name="Madupu R."/>
            <person name="Nelson W.C."/>
            <person name="White O."/>
            <person name="Peterson J.D."/>
            <person name="Khouri H.M."/>
            <person name="Hance I."/>
            <person name="Chris Lee P."/>
            <person name="Holtzapple E.K."/>
            <person name="Scanlan D."/>
            <person name="Tran K."/>
            <person name="Moazzez A."/>
            <person name="Utterback T.R."/>
            <person name="Rizzo M."/>
            <person name="Lee K."/>
            <person name="Kosack D."/>
            <person name="Moestl D."/>
            <person name="Wedler H."/>
            <person name="Lauber J."/>
            <person name="Stjepandic D."/>
            <person name="Hoheisel J."/>
            <person name="Straetz M."/>
            <person name="Heim S."/>
            <person name="Kiewitz C."/>
            <person name="Eisen J.A."/>
            <person name="Timmis K.N."/>
            <person name="Duesterhoeft A."/>
            <person name="Tuemmler B."/>
            <person name="Fraser C.M."/>
        </authorList>
    </citation>
    <scope>NUCLEOTIDE SEQUENCE [LARGE SCALE GENOMIC DNA]</scope>
    <source>
        <strain>ATCC 47054 / DSM 6125 / CFBP 8728 / NCIMB 11950 / KT2440</strain>
    </source>
</reference>
<protein>
    <recommendedName>
        <fullName evidence="1">Phosphate import ATP-binding protein PstB 1</fullName>
        <ecNumber evidence="1">7.3.2.1</ecNumber>
    </recommendedName>
    <alternativeName>
        <fullName evidence="1">ABC phosphate transporter 1</fullName>
    </alternativeName>
    <alternativeName>
        <fullName evidence="1">Phosphate-transporting ATPase 1</fullName>
    </alternativeName>
</protein>
<name>PSTB1_PSEPK</name>
<accession>Q88JJ0</accession>
<evidence type="ECO:0000255" key="1">
    <source>
        <dbReference type="HAMAP-Rule" id="MF_01702"/>
    </source>
</evidence>